<protein>
    <recommendedName>
        <fullName evidence="1">Large ribosomal subunit protein bL27</fullName>
    </recommendedName>
    <alternativeName>
        <fullName evidence="3">50S ribosomal protein L27</fullName>
    </alternativeName>
</protein>
<accession>A8F2N7</accession>
<gene>
    <name evidence="1" type="primary">rpmA</name>
    <name type="ordered locus">RMA_1187</name>
</gene>
<proteinExistence type="inferred from homology"/>
<name>RL27_RICM5</name>
<organism>
    <name type="scientific">Rickettsia massiliae (strain Mtu5)</name>
    <dbReference type="NCBI Taxonomy" id="416276"/>
    <lineage>
        <taxon>Bacteria</taxon>
        <taxon>Pseudomonadati</taxon>
        <taxon>Pseudomonadota</taxon>
        <taxon>Alphaproteobacteria</taxon>
        <taxon>Rickettsiales</taxon>
        <taxon>Rickettsiaceae</taxon>
        <taxon>Rickettsieae</taxon>
        <taxon>Rickettsia</taxon>
        <taxon>spotted fever group</taxon>
    </lineage>
</organism>
<keyword id="KW-0687">Ribonucleoprotein</keyword>
<keyword id="KW-0689">Ribosomal protein</keyword>
<sequence>MATKKAGGSSRNGRDSAGRRLGVKKADGQYVIPGNIIVRQRGTKIHPGTNVGLGKDHTIFALIEGRVEFLTKRNHKIVNVKEIASTY</sequence>
<dbReference type="EMBL" id="CP000683">
    <property type="protein sequence ID" value="ABV85173.1"/>
    <property type="molecule type" value="Genomic_DNA"/>
</dbReference>
<dbReference type="RefSeq" id="WP_012153137.1">
    <property type="nucleotide sequence ID" value="NC_009900.1"/>
</dbReference>
<dbReference type="SMR" id="A8F2N7"/>
<dbReference type="KEGG" id="rms:RMA_1187"/>
<dbReference type="HOGENOM" id="CLU_095424_4_1_5"/>
<dbReference type="Proteomes" id="UP000001311">
    <property type="component" value="Chromosome"/>
</dbReference>
<dbReference type="GO" id="GO:1990904">
    <property type="term" value="C:ribonucleoprotein complex"/>
    <property type="evidence" value="ECO:0007669"/>
    <property type="project" value="UniProtKB-KW"/>
</dbReference>
<dbReference type="GO" id="GO:0005840">
    <property type="term" value="C:ribosome"/>
    <property type="evidence" value="ECO:0007669"/>
    <property type="project" value="UniProtKB-KW"/>
</dbReference>
<dbReference type="GO" id="GO:0003735">
    <property type="term" value="F:structural constituent of ribosome"/>
    <property type="evidence" value="ECO:0007669"/>
    <property type="project" value="InterPro"/>
</dbReference>
<dbReference type="GO" id="GO:0006412">
    <property type="term" value="P:translation"/>
    <property type="evidence" value="ECO:0007669"/>
    <property type="project" value="UniProtKB-UniRule"/>
</dbReference>
<dbReference type="FunFam" id="2.40.50.100:FF:000020">
    <property type="entry name" value="50S ribosomal protein L27"/>
    <property type="match status" value="1"/>
</dbReference>
<dbReference type="Gene3D" id="2.40.50.100">
    <property type="match status" value="1"/>
</dbReference>
<dbReference type="HAMAP" id="MF_00539">
    <property type="entry name" value="Ribosomal_bL27"/>
    <property type="match status" value="1"/>
</dbReference>
<dbReference type="InterPro" id="IPR001684">
    <property type="entry name" value="Ribosomal_bL27"/>
</dbReference>
<dbReference type="InterPro" id="IPR018261">
    <property type="entry name" value="Ribosomal_bL27_CS"/>
</dbReference>
<dbReference type="NCBIfam" id="TIGR00062">
    <property type="entry name" value="L27"/>
    <property type="match status" value="1"/>
</dbReference>
<dbReference type="PANTHER" id="PTHR15893:SF0">
    <property type="entry name" value="LARGE RIBOSOMAL SUBUNIT PROTEIN BL27M"/>
    <property type="match status" value="1"/>
</dbReference>
<dbReference type="PANTHER" id="PTHR15893">
    <property type="entry name" value="RIBOSOMAL PROTEIN L27"/>
    <property type="match status" value="1"/>
</dbReference>
<dbReference type="Pfam" id="PF01016">
    <property type="entry name" value="Ribosomal_L27"/>
    <property type="match status" value="1"/>
</dbReference>
<dbReference type="PRINTS" id="PR00063">
    <property type="entry name" value="RIBOSOMALL27"/>
</dbReference>
<dbReference type="SUPFAM" id="SSF110324">
    <property type="entry name" value="Ribosomal L27 protein-like"/>
    <property type="match status" value="1"/>
</dbReference>
<dbReference type="PROSITE" id="PS00831">
    <property type="entry name" value="RIBOSOMAL_L27"/>
    <property type="match status" value="1"/>
</dbReference>
<comment type="similarity">
    <text evidence="1">Belongs to the bacterial ribosomal protein bL27 family.</text>
</comment>
<reference key="1">
    <citation type="journal article" date="2007" name="Genome Res.">
        <title>Lateral gene transfer between obligate intracellular bacteria: evidence from the Rickettsia massiliae genome.</title>
        <authorList>
            <person name="Blanc G."/>
            <person name="Ogata H."/>
            <person name="Robert C."/>
            <person name="Audic S."/>
            <person name="Claverie J.-M."/>
            <person name="Raoult D."/>
        </authorList>
    </citation>
    <scope>NUCLEOTIDE SEQUENCE [LARGE SCALE GENOMIC DNA]</scope>
    <source>
        <strain>Mtu5</strain>
    </source>
</reference>
<feature type="chain" id="PRO_1000061050" description="Large ribosomal subunit protein bL27">
    <location>
        <begin position="1"/>
        <end position="87"/>
    </location>
</feature>
<feature type="region of interest" description="Disordered" evidence="2">
    <location>
        <begin position="1"/>
        <end position="24"/>
    </location>
</feature>
<evidence type="ECO:0000255" key="1">
    <source>
        <dbReference type="HAMAP-Rule" id="MF_00539"/>
    </source>
</evidence>
<evidence type="ECO:0000256" key="2">
    <source>
        <dbReference type="SAM" id="MobiDB-lite"/>
    </source>
</evidence>
<evidence type="ECO:0000305" key="3"/>